<accession>P80640</accession>
<organism>
    <name type="scientific">Zea mays</name>
    <name type="common">Maize</name>
    <dbReference type="NCBI Taxonomy" id="4577"/>
    <lineage>
        <taxon>Eukaryota</taxon>
        <taxon>Viridiplantae</taxon>
        <taxon>Streptophyta</taxon>
        <taxon>Embryophyta</taxon>
        <taxon>Tracheophyta</taxon>
        <taxon>Spermatophyta</taxon>
        <taxon>Magnoliopsida</taxon>
        <taxon>Liliopsida</taxon>
        <taxon>Poales</taxon>
        <taxon>Poaceae</taxon>
        <taxon>PACMAD clade</taxon>
        <taxon>Panicoideae</taxon>
        <taxon>Andropogonodae</taxon>
        <taxon>Andropogoneae</taxon>
        <taxon>Tripsacinae</taxon>
        <taxon>Zea</taxon>
    </lineage>
</organism>
<comment type="miscellaneous">
    <text>On the 2D-gel the determined pI of this unknown protein is: 5.7, its MW is: 41.1 kDa.</text>
</comment>
<comment type="caution">
    <text evidence="1">The order of the peptides shown is unknown.</text>
</comment>
<sequence length="14" mass="1528">SIXEPLALSVFDEP</sequence>
<keyword id="KW-0903">Direct protein sequencing</keyword>
<keyword id="KW-1185">Reference proteome</keyword>
<feature type="chain" id="PRO_0000055529" description="Unknown protein from spot 360 of 2D-PAGE of etiolated coleoptile">
    <location>
        <begin position="1" status="less than"/>
        <end position="14" status="greater than"/>
    </location>
</feature>
<feature type="non-consecutive residues" evidence="1">
    <location>
        <begin position="8"/>
        <end position="9"/>
    </location>
</feature>
<feature type="non-terminal residue">
    <location>
        <position position="1"/>
    </location>
</feature>
<feature type="non-terminal residue">
    <location>
        <position position="14"/>
    </location>
</feature>
<reference key="1">
    <citation type="journal article" date="1996" name="Theor. Appl. Genet.">
        <title>The maize two dimensional gel protein database: towards an integrated genome analysis program.</title>
        <authorList>
            <person name="Touzet P."/>
            <person name="Riccardi F."/>
            <person name="Morin C."/>
            <person name="Damerval C."/>
            <person name="Huet J.-C."/>
            <person name="Pernollet J.-C."/>
            <person name="Zivy M."/>
            <person name="de Vienne D."/>
        </authorList>
        <dbReference type="AGRICOLA" id="IND20551642"/>
    </citation>
    <scope>PROTEIN SEQUENCE</scope>
    <source>
        <tissue>Coleoptile</tissue>
    </source>
</reference>
<protein>
    <recommendedName>
        <fullName>Unknown protein from spot 360 of 2D-PAGE of etiolated coleoptile</fullName>
    </recommendedName>
</protein>
<proteinExistence type="evidence at protein level"/>
<name>UC34_MAIZE</name>
<evidence type="ECO:0000305" key="1"/>
<dbReference type="MaizeGDB" id="123965"/>
<dbReference type="InParanoid" id="P80640"/>
<dbReference type="Proteomes" id="UP000007305">
    <property type="component" value="Unplaced"/>
</dbReference>